<protein>
    <recommendedName>
        <fullName evidence="1">NADH-quinone oxidoreductase subunit H</fullName>
        <ecNumber evidence="1">7.1.1.-</ecNumber>
    </recommendedName>
    <alternativeName>
        <fullName evidence="1">NADH dehydrogenase I subunit H</fullName>
    </alternativeName>
    <alternativeName>
        <fullName evidence="1">NDH-1 subunit H</fullName>
    </alternativeName>
</protein>
<proteinExistence type="inferred from homology"/>
<keyword id="KW-0997">Cell inner membrane</keyword>
<keyword id="KW-1003">Cell membrane</keyword>
<keyword id="KW-0472">Membrane</keyword>
<keyword id="KW-0520">NAD</keyword>
<keyword id="KW-0874">Quinone</keyword>
<keyword id="KW-1278">Translocase</keyword>
<keyword id="KW-0812">Transmembrane</keyword>
<keyword id="KW-1133">Transmembrane helix</keyword>
<keyword id="KW-0830">Ubiquinone</keyword>
<feature type="chain" id="PRO_1000143595" description="NADH-quinone oxidoreductase subunit H">
    <location>
        <begin position="1"/>
        <end position="325"/>
    </location>
</feature>
<feature type="transmembrane region" description="Helical" evidence="1">
    <location>
        <begin position="11"/>
        <end position="31"/>
    </location>
</feature>
<feature type="transmembrane region" description="Helical" evidence="1">
    <location>
        <begin position="81"/>
        <end position="101"/>
    </location>
</feature>
<feature type="transmembrane region" description="Helical" evidence="1">
    <location>
        <begin position="114"/>
        <end position="134"/>
    </location>
</feature>
<feature type="transmembrane region" description="Helical" evidence="1">
    <location>
        <begin position="154"/>
        <end position="174"/>
    </location>
</feature>
<feature type="transmembrane region" description="Helical" evidence="1">
    <location>
        <begin position="186"/>
        <end position="206"/>
    </location>
</feature>
<feature type="transmembrane region" description="Helical" evidence="1">
    <location>
        <begin position="237"/>
        <end position="257"/>
    </location>
</feature>
<feature type="transmembrane region" description="Helical" evidence="1">
    <location>
        <begin position="265"/>
        <end position="285"/>
    </location>
</feature>
<feature type="transmembrane region" description="Helical" evidence="1">
    <location>
        <begin position="304"/>
        <end position="324"/>
    </location>
</feature>
<gene>
    <name evidence="1" type="primary">nuoH</name>
    <name type="ordered locus">ECUMN_2621</name>
</gene>
<organism>
    <name type="scientific">Escherichia coli O17:K52:H18 (strain UMN026 / ExPEC)</name>
    <dbReference type="NCBI Taxonomy" id="585056"/>
    <lineage>
        <taxon>Bacteria</taxon>
        <taxon>Pseudomonadati</taxon>
        <taxon>Pseudomonadota</taxon>
        <taxon>Gammaproteobacteria</taxon>
        <taxon>Enterobacterales</taxon>
        <taxon>Enterobacteriaceae</taxon>
        <taxon>Escherichia</taxon>
    </lineage>
</organism>
<accession>B7N5P4</accession>
<dbReference type="EC" id="7.1.1.-" evidence="1"/>
<dbReference type="EMBL" id="CU928163">
    <property type="protein sequence ID" value="CAR13803.1"/>
    <property type="molecule type" value="Genomic_DNA"/>
</dbReference>
<dbReference type="RefSeq" id="WP_000118507.1">
    <property type="nucleotide sequence ID" value="NC_011751.1"/>
</dbReference>
<dbReference type="RefSeq" id="YP_002413331.1">
    <property type="nucleotide sequence ID" value="NC_011751.1"/>
</dbReference>
<dbReference type="SMR" id="B7N5P4"/>
<dbReference type="STRING" id="585056.ECUMN_2621"/>
<dbReference type="GeneID" id="93774892"/>
<dbReference type="KEGG" id="eum:ECUMN_2621"/>
<dbReference type="PATRIC" id="fig|585056.7.peg.2802"/>
<dbReference type="HOGENOM" id="CLU_015134_0_1_6"/>
<dbReference type="Proteomes" id="UP000007097">
    <property type="component" value="Chromosome"/>
</dbReference>
<dbReference type="GO" id="GO:0005886">
    <property type="term" value="C:plasma membrane"/>
    <property type="evidence" value="ECO:0007669"/>
    <property type="project" value="UniProtKB-SubCell"/>
</dbReference>
<dbReference type="GO" id="GO:0003954">
    <property type="term" value="F:NADH dehydrogenase activity"/>
    <property type="evidence" value="ECO:0007669"/>
    <property type="project" value="TreeGrafter"/>
</dbReference>
<dbReference type="GO" id="GO:0016655">
    <property type="term" value="F:oxidoreductase activity, acting on NAD(P)H, quinone or similar compound as acceptor"/>
    <property type="evidence" value="ECO:0007669"/>
    <property type="project" value="UniProtKB-UniRule"/>
</dbReference>
<dbReference type="GO" id="GO:0048038">
    <property type="term" value="F:quinone binding"/>
    <property type="evidence" value="ECO:0007669"/>
    <property type="project" value="UniProtKB-KW"/>
</dbReference>
<dbReference type="GO" id="GO:0009060">
    <property type="term" value="P:aerobic respiration"/>
    <property type="evidence" value="ECO:0007669"/>
    <property type="project" value="TreeGrafter"/>
</dbReference>
<dbReference type="HAMAP" id="MF_01350">
    <property type="entry name" value="NDH1_NuoH"/>
    <property type="match status" value="1"/>
</dbReference>
<dbReference type="InterPro" id="IPR001694">
    <property type="entry name" value="NADH_UbQ_OxRdtase_su1/FPO"/>
</dbReference>
<dbReference type="InterPro" id="IPR018086">
    <property type="entry name" value="NADH_UbQ_OxRdtase_su1_CS"/>
</dbReference>
<dbReference type="NCBIfam" id="NF004740">
    <property type="entry name" value="PRK06076.1-1"/>
    <property type="match status" value="1"/>
</dbReference>
<dbReference type="NCBIfam" id="NF004741">
    <property type="entry name" value="PRK06076.1-2"/>
    <property type="match status" value="1"/>
</dbReference>
<dbReference type="PANTHER" id="PTHR11432">
    <property type="entry name" value="NADH DEHYDROGENASE SUBUNIT 1"/>
    <property type="match status" value="1"/>
</dbReference>
<dbReference type="PANTHER" id="PTHR11432:SF3">
    <property type="entry name" value="NADH-UBIQUINONE OXIDOREDUCTASE CHAIN 1"/>
    <property type="match status" value="1"/>
</dbReference>
<dbReference type="Pfam" id="PF00146">
    <property type="entry name" value="NADHdh"/>
    <property type="match status" value="1"/>
</dbReference>
<dbReference type="PROSITE" id="PS00667">
    <property type="entry name" value="COMPLEX1_ND1_1"/>
    <property type="match status" value="1"/>
</dbReference>
<dbReference type="PROSITE" id="PS00668">
    <property type="entry name" value="COMPLEX1_ND1_2"/>
    <property type="match status" value="1"/>
</dbReference>
<reference key="1">
    <citation type="journal article" date="2009" name="PLoS Genet.">
        <title>Organised genome dynamics in the Escherichia coli species results in highly diverse adaptive paths.</title>
        <authorList>
            <person name="Touchon M."/>
            <person name="Hoede C."/>
            <person name="Tenaillon O."/>
            <person name="Barbe V."/>
            <person name="Baeriswyl S."/>
            <person name="Bidet P."/>
            <person name="Bingen E."/>
            <person name="Bonacorsi S."/>
            <person name="Bouchier C."/>
            <person name="Bouvet O."/>
            <person name="Calteau A."/>
            <person name="Chiapello H."/>
            <person name="Clermont O."/>
            <person name="Cruveiller S."/>
            <person name="Danchin A."/>
            <person name="Diard M."/>
            <person name="Dossat C."/>
            <person name="Karoui M.E."/>
            <person name="Frapy E."/>
            <person name="Garry L."/>
            <person name="Ghigo J.M."/>
            <person name="Gilles A.M."/>
            <person name="Johnson J."/>
            <person name="Le Bouguenec C."/>
            <person name="Lescat M."/>
            <person name="Mangenot S."/>
            <person name="Martinez-Jehanne V."/>
            <person name="Matic I."/>
            <person name="Nassif X."/>
            <person name="Oztas S."/>
            <person name="Petit M.A."/>
            <person name="Pichon C."/>
            <person name="Rouy Z."/>
            <person name="Ruf C.S."/>
            <person name="Schneider D."/>
            <person name="Tourret J."/>
            <person name="Vacherie B."/>
            <person name="Vallenet D."/>
            <person name="Medigue C."/>
            <person name="Rocha E.P.C."/>
            <person name="Denamur E."/>
        </authorList>
    </citation>
    <scope>NUCLEOTIDE SEQUENCE [LARGE SCALE GENOMIC DNA]</scope>
    <source>
        <strain>UMN026 / ExPEC</strain>
    </source>
</reference>
<evidence type="ECO:0000255" key="1">
    <source>
        <dbReference type="HAMAP-Rule" id="MF_01350"/>
    </source>
</evidence>
<comment type="function">
    <text evidence="1">NDH-1 shuttles electrons from NADH, via FMN and iron-sulfur (Fe-S) centers, to quinones in the respiratory chain. The immediate electron acceptor for the enzyme in this species is believed to be ubiquinone. Couples the redox reaction to proton translocation (for every two electrons transferred, four hydrogen ions are translocated across the cytoplasmic membrane), and thus conserves the redox energy in a proton gradient. This subunit may bind ubiquinone.</text>
</comment>
<comment type="catalytic activity">
    <reaction evidence="1">
        <text>a quinone + NADH + 5 H(+)(in) = a quinol + NAD(+) + 4 H(+)(out)</text>
        <dbReference type="Rhea" id="RHEA:57888"/>
        <dbReference type="ChEBI" id="CHEBI:15378"/>
        <dbReference type="ChEBI" id="CHEBI:24646"/>
        <dbReference type="ChEBI" id="CHEBI:57540"/>
        <dbReference type="ChEBI" id="CHEBI:57945"/>
        <dbReference type="ChEBI" id="CHEBI:132124"/>
    </reaction>
</comment>
<comment type="subunit">
    <text evidence="1">NDH-1 is composed of 13 different subunits. Subunits NuoA, H, J, K, L, M, N constitute the membrane sector of the complex.</text>
</comment>
<comment type="subcellular location">
    <subcellularLocation>
        <location evidence="1">Cell inner membrane</location>
        <topology evidence="1">Multi-pass membrane protein</topology>
    </subcellularLocation>
</comment>
<comment type="similarity">
    <text evidence="1">Belongs to the complex I subunit 1 family.</text>
</comment>
<sequence>MSWISPELIEILLTILKAVVILLVVVTCGAFMSFGERRLLGLFQNRYGPNRVGWGGSLQLVADMIKMFFKEDWIPKFSDRVIFTLAPMIAFTSLLLAFAIVPVSPGWVVADLNIGILFFLMMAGLAVYAVLFAGWSSNNKYSLLGAMRASAQTLSYEVFLGLSLMGVVAQAGSFNMTDIVNSQAHVWNVIPQFFGFITFAIAGVAVCHRHPFDQPEAEQELADGYHIEYSGMKFGLFFVGEYIGIVTISALMVTLFFGGWQGPLLPPFIWFALKTAFFMMMFILIRASLPRPRYDQVMSFGWKICLPLTLINLLVTAAVILWQAQ</sequence>
<name>NUOH_ECOLU</name>